<reference key="1">
    <citation type="journal article" date="1975" name="Eur. J. Biochem.">
        <title>Hemachatus haemachatus (Ringhals) venom. Purification, some properties and amino-acid sequence of phospholipase A (fraction DE-I).</title>
        <authorList>
            <person name="Joubert F.J."/>
        </authorList>
    </citation>
    <scope>PROTEIN SEQUENCE</scope>
    <source>
        <tissue>Venom</tissue>
    </source>
</reference>
<reference key="2">
    <citation type="journal article" date="1980" name="Toxicon">
        <title>Chemical modification of the histidine residue in phospholipase A2 from the Hemachatus haemachatus snake venom.</title>
        <authorList>
            <person name="Yang C.C."/>
            <person name="King K."/>
        </authorList>
    </citation>
    <scope>SITE</scope>
</reference>
<accession>P00595</accession>
<organism>
    <name type="scientific">Hemachatus haemachatus</name>
    <name type="common">Rinkhals</name>
    <name type="synonym">Sepedon haemachatus</name>
    <dbReference type="NCBI Taxonomy" id="8626"/>
    <lineage>
        <taxon>Eukaryota</taxon>
        <taxon>Metazoa</taxon>
        <taxon>Chordata</taxon>
        <taxon>Craniata</taxon>
        <taxon>Vertebrata</taxon>
        <taxon>Euteleostomi</taxon>
        <taxon>Lepidosauria</taxon>
        <taxon>Squamata</taxon>
        <taxon>Bifurcata</taxon>
        <taxon>Unidentata</taxon>
        <taxon>Episquamata</taxon>
        <taxon>Toxicofera</taxon>
        <taxon>Serpentes</taxon>
        <taxon>Colubroidea</taxon>
        <taxon>Elapidae</taxon>
        <taxon>Elapinae</taxon>
        <taxon>Hemachatus</taxon>
    </lineage>
</organism>
<sequence length="119" mass="13519">NLYQFKNMIKCTVPSRSWWHFANYGCYCGRGGSGTPVDDLDRCCQTHDNCYSDAEKISGCRPYFKTYSYDCTKGKLTCKEGNNECAAFVCKCDRLAAICFAGAHYNDNNNYIDLARHCQ</sequence>
<proteinExistence type="evidence at protein level"/>
<feature type="chain" id="PRO_0000161649" description="Basic phospholipase A2 DE-1">
    <location>
        <begin position="1"/>
        <end position="119"/>
    </location>
</feature>
<feature type="active site" evidence="2 3">
    <location>
        <position position="93"/>
    </location>
</feature>
<feature type="binding site" evidence="1">
    <location>
        <position position="27"/>
    </location>
    <ligand>
        <name>Ca(2+)</name>
        <dbReference type="ChEBI" id="CHEBI:29108"/>
    </ligand>
</feature>
<feature type="binding site" evidence="1">
    <location>
        <position position="29"/>
    </location>
    <ligand>
        <name>Ca(2+)</name>
        <dbReference type="ChEBI" id="CHEBI:29108"/>
    </ligand>
</feature>
<feature type="binding site" evidence="1">
    <location>
        <position position="31"/>
    </location>
    <ligand>
        <name>Ca(2+)</name>
        <dbReference type="ChEBI" id="CHEBI:29108"/>
    </ligand>
</feature>
<feature type="binding site" evidence="1">
    <location>
        <position position="48"/>
    </location>
    <ligand>
        <name>Ca(2+)</name>
        <dbReference type="ChEBI" id="CHEBI:29108"/>
    </ligand>
</feature>
<feature type="site" description="Activity and toxicity lost upon alkylation, Ca(2+) markedly slows inactivation">
    <location>
        <position position="47"/>
    </location>
</feature>
<feature type="disulfide bond" evidence="1">
    <location>
        <begin position="11"/>
        <end position="71"/>
    </location>
</feature>
<feature type="disulfide bond" evidence="1">
    <location>
        <begin position="26"/>
        <end position="118"/>
    </location>
</feature>
<feature type="disulfide bond" evidence="1">
    <location>
        <begin position="28"/>
        <end position="44"/>
    </location>
</feature>
<feature type="disulfide bond" evidence="1">
    <location>
        <begin position="43"/>
        <end position="99"/>
    </location>
</feature>
<feature type="disulfide bond" evidence="1">
    <location>
        <begin position="50"/>
        <end position="92"/>
    </location>
</feature>
<feature type="disulfide bond" evidence="1">
    <location>
        <begin position="60"/>
        <end position="85"/>
    </location>
</feature>
<feature type="disulfide bond" evidence="1">
    <location>
        <begin position="78"/>
        <end position="90"/>
    </location>
</feature>
<dbReference type="EC" id="3.1.1.4"/>
<dbReference type="PIR" id="A00738">
    <property type="entry name" value="PSRIA"/>
</dbReference>
<dbReference type="SMR" id="P00595"/>
<dbReference type="GO" id="GO:0005576">
    <property type="term" value="C:extracellular region"/>
    <property type="evidence" value="ECO:0007669"/>
    <property type="project" value="UniProtKB-SubCell"/>
</dbReference>
<dbReference type="GO" id="GO:0005509">
    <property type="term" value="F:calcium ion binding"/>
    <property type="evidence" value="ECO:0007669"/>
    <property type="project" value="InterPro"/>
</dbReference>
<dbReference type="GO" id="GO:0047498">
    <property type="term" value="F:calcium-dependent phospholipase A2 activity"/>
    <property type="evidence" value="ECO:0007669"/>
    <property type="project" value="TreeGrafter"/>
</dbReference>
<dbReference type="GO" id="GO:0005543">
    <property type="term" value="F:phospholipid binding"/>
    <property type="evidence" value="ECO:0007669"/>
    <property type="project" value="TreeGrafter"/>
</dbReference>
<dbReference type="GO" id="GO:0005102">
    <property type="term" value="F:signaling receptor binding"/>
    <property type="evidence" value="ECO:0007669"/>
    <property type="project" value="TreeGrafter"/>
</dbReference>
<dbReference type="GO" id="GO:0090729">
    <property type="term" value="F:toxin activity"/>
    <property type="evidence" value="ECO:0007669"/>
    <property type="project" value="UniProtKB-KW"/>
</dbReference>
<dbReference type="GO" id="GO:0050482">
    <property type="term" value="P:arachidonate secretion"/>
    <property type="evidence" value="ECO:0007669"/>
    <property type="project" value="InterPro"/>
</dbReference>
<dbReference type="GO" id="GO:0006633">
    <property type="term" value="P:fatty acid biosynthetic process"/>
    <property type="evidence" value="ECO:0007669"/>
    <property type="project" value="TreeGrafter"/>
</dbReference>
<dbReference type="GO" id="GO:0016042">
    <property type="term" value="P:lipid catabolic process"/>
    <property type="evidence" value="ECO:0007669"/>
    <property type="project" value="UniProtKB-KW"/>
</dbReference>
<dbReference type="GO" id="GO:0006644">
    <property type="term" value="P:phospholipid metabolic process"/>
    <property type="evidence" value="ECO:0007669"/>
    <property type="project" value="InterPro"/>
</dbReference>
<dbReference type="GO" id="GO:0048146">
    <property type="term" value="P:positive regulation of fibroblast proliferation"/>
    <property type="evidence" value="ECO:0007669"/>
    <property type="project" value="TreeGrafter"/>
</dbReference>
<dbReference type="CDD" id="cd00125">
    <property type="entry name" value="PLA2c"/>
    <property type="match status" value="1"/>
</dbReference>
<dbReference type="FunFam" id="1.20.90.10:FF:000007">
    <property type="entry name" value="Acidic phospholipase A2"/>
    <property type="match status" value="1"/>
</dbReference>
<dbReference type="Gene3D" id="1.20.90.10">
    <property type="entry name" value="Phospholipase A2 domain"/>
    <property type="match status" value="1"/>
</dbReference>
<dbReference type="InterPro" id="IPR001211">
    <property type="entry name" value="PLipase_A2"/>
</dbReference>
<dbReference type="InterPro" id="IPR033112">
    <property type="entry name" value="PLipase_A2_Asp_AS"/>
</dbReference>
<dbReference type="InterPro" id="IPR016090">
    <property type="entry name" value="PLipase_A2_dom"/>
</dbReference>
<dbReference type="InterPro" id="IPR036444">
    <property type="entry name" value="PLipase_A2_dom_sf"/>
</dbReference>
<dbReference type="InterPro" id="IPR033113">
    <property type="entry name" value="PLipase_A2_His_AS"/>
</dbReference>
<dbReference type="PANTHER" id="PTHR11716:SF94">
    <property type="entry name" value="PHOSPHOLIPASE A2"/>
    <property type="match status" value="1"/>
</dbReference>
<dbReference type="PANTHER" id="PTHR11716">
    <property type="entry name" value="PHOSPHOLIPASE A2 FAMILY MEMBER"/>
    <property type="match status" value="1"/>
</dbReference>
<dbReference type="Pfam" id="PF00068">
    <property type="entry name" value="Phospholip_A2_1"/>
    <property type="match status" value="1"/>
</dbReference>
<dbReference type="PRINTS" id="PR00389">
    <property type="entry name" value="PHPHLIPASEA2"/>
</dbReference>
<dbReference type="SMART" id="SM00085">
    <property type="entry name" value="PA2c"/>
    <property type="match status" value="1"/>
</dbReference>
<dbReference type="SUPFAM" id="SSF48619">
    <property type="entry name" value="Phospholipase A2, PLA2"/>
    <property type="match status" value="1"/>
</dbReference>
<dbReference type="PROSITE" id="PS00119">
    <property type="entry name" value="PA2_ASP"/>
    <property type="match status" value="1"/>
</dbReference>
<dbReference type="PROSITE" id="PS00118">
    <property type="entry name" value="PA2_HIS"/>
    <property type="match status" value="1"/>
</dbReference>
<name>PA2B1_HEMHA</name>
<protein>
    <recommendedName>
        <fullName>Basic phospholipase A2 DE-1</fullName>
        <shortName>svPLA2</shortName>
        <ecNumber>3.1.1.4</ecNumber>
    </recommendedName>
    <alternativeName>
        <fullName>Phosphatidylcholine 2-acylhydrolase</fullName>
    </alternativeName>
</protein>
<comment type="function">
    <text evidence="1">PLA2 catalyzes the calcium-dependent hydrolysis of the 2-acyl groups in 3-sn-phosphoglycerides.</text>
</comment>
<comment type="catalytic activity">
    <reaction evidence="2 3">
        <text>a 1,2-diacyl-sn-glycero-3-phosphocholine + H2O = a 1-acyl-sn-glycero-3-phosphocholine + a fatty acid + H(+)</text>
        <dbReference type="Rhea" id="RHEA:15801"/>
        <dbReference type="ChEBI" id="CHEBI:15377"/>
        <dbReference type="ChEBI" id="CHEBI:15378"/>
        <dbReference type="ChEBI" id="CHEBI:28868"/>
        <dbReference type="ChEBI" id="CHEBI:57643"/>
        <dbReference type="ChEBI" id="CHEBI:58168"/>
        <dbReference type="EC" id="3.1.1.4"/>
    </reaction>
</comment>
<comment type="cofactor">
    <cofactor evidence="1">
        <name>Ca(2+)</name>
        <dbReference type="ChEBI" id="CHEBI:29108"/>
    </cofactor>
    <text evidence="1">Binds 1 Ca(2+) ion.</text>
</comment>
<comment type="subcellular location">
    <subcellularLocation>
        <location>Secreted</location>
    </subcellularLocation>
</comment>
<comment type="tissue specificity">
    <text>Expressed by the venom gland.</text>
</comment>
<comment type="toxic dose">
    <text>LD(50) is 8.6 mg/kg by intravenous injection.</text>
</comment>
<comment type="miscellaneous">
    <text>Two forms of phospholipase A2 are found in Ringhals venom.</text>
</comment>
<comment type="similarity">
    <text evidence="4">Belongs to the phospholipase A2 family. Group I subfamily. D49 sub-subfamily.</text>
</comment>
<evidence type="ECO:0000250" key="1"/>
<evidence type="ECO:0000255" key="2">
    <source>
        <dbReference type="PROSITE-ProRule" id="PRU10035"/>
    </source>
</evidence>
<evidence type="ECO:0000255" key="3">
    <source>
        <dbReference type="PROSITE-ProRule" id="PRU10036"/>
    </source>
</evidence>
<evidence type="ECO:0000305" key="4"/>
<keyword id="KW-0106">Calcium</keyword>
<keyword id="KW-0903">Direct protein sequencing</keyword>
<keyword id="KW-1015">Disulfide bond</keyword>
<keyword id="KW-0378">Hydrolase</keyword>
<keyword id="KW-0442">Lipid degradation</keyword>
<keyword id="KW-0443">Lipid metabolism</keyword>
<keyword id="KW-0479">Metal-binding</keyword>
<keyword id="KW-0964">Secreted</keyword>
<keyword id="KW-0800">Toxin</keyword>